<evidence type="ECO:0000250" key="1"/>
<evidence type="ECO:0000256" key="2">
    <source>
        <dbReference type="SAM" id="MobiDB-lite"/>
    </source>
</evidence>
<evidence type="ECO:0000305" key="3"/>
<name>MBP_XENLA</name>
<organism>
    <name type="scientific">Xenopus laevis</name>
    <name type="common">African clawed frog</name>
    <dbReference type="NCBI Taxonomy" id="8355"/>
    <lineage>
        <taxon>Eukaryota</taxon>
        <taxon>Metazoa</taxon>
        <taxon>Chordata</taxon>
        <taxon>Craniata</taxon>
        <taxon>Vertebrata</taxon>
        <taxon>Euteleostomi</taxon>
        <taxon>Amphibia</taxon>
        <taxon>Batrachia</taxon>
        <taxon>Anura</taxon>
        <taxon>Pipoidea</taxon>
        <taxon>Pipidae</taxon>
        <taxon>Xenopodinae</taxon>
        <taxon>Xenopus</taxon>
        <taxon>Xenopus</taxon>
    </lineage>
</organism>
<proteinExistence type="evidence at transcript level"/>
<protein>
    <recommendedName>
        <fullName>Myelin basic protein</fullName>
        <shortName>MBP</shortName>
    </recommendedName>
    <alternativeName>
        <fullName>Myelin A1 protein</fullName>
    </alternativeName>
</protein>
<comment type="function">
    <text evidence="1">Is, with PLP, the most abundant protein component of the myelin membrane in the CNS. Plays a role in both the formation and stabilization of this compact multilayer arrangement of bilayers. Each splice variant and charge isomer may have a specialized function in the assembly of an optimized, biochemically functional myelin membrane (By similarity).</text>
</comment>
<comment type="subunit">
    <text evidence="1">Homodimer.</text>
</comment>
<comment type="subcellular location">
    <subcellularLocation>
        <location>Myelin membrane</location>
        <topology>Peripheral membrane protein</topology>
        <orientation>Cytoplasmic side</orientation>
    </subcellularLocation>
    <text>Cytoplasmic side of myelin.</text>
</comment>
<comment type="PTM">
    <text>As in other animals, several charge isomers may be produced as a result of optional post-translational modifications, such as phosphorylation of serine or threonine residues, deamidation of glutamine or asparagine residues, citrullination and methylation of arginine residues.</text>
</comment>
<comment type="similarity">
    <text evidence="3">Belongs to the myelin basic protein family.</text>
</comment>
<keyword id="KW-0007">Acetylation</keyword>
<keyword id="KW-1003">Cell membrane</keyword>
<keyword id="KW-0164">Citrullination</keyword>
<keyword id="KW-0472">Membrane</keyword>
<keyword id="KW-0488">Methylation</keyword>
<keyword id="KW-0597">Phosphoprotein</keyword>
<keyword id="KW-1185">Reference proteome</keyword>
<accession>P87346</accession>
<accession>A2VDD9</accession>
<feature type="initiator methionine" description="Removed" evidence="1">
    <location>
        <position position="1"/>
    </location>
</feature>
<feature type="chain" id="PRO_0000158997" description="Myelin basic protein">
    <location>
        <begin position="2"/>
        <end position="176"/>
    </location>
</feature>
<feature type="region of interest" description="Disordered" evidence="2">
    <location>
        <begin position="1"/>
        <end position="176"/>
    </location>
</feature>
<feature type="compositionally biased region" description="Basic residues" evidence="2">
    <location>
        <begin position="1"/>
        <end position="11"/>
    </location>
</feature>
<feature type="compositionally biased region" description="Basic and acidic residues" evidence="2">
    <location>
        <begin position="134"/>
        <end position="153"/>
    </location>
</feature>
<feature type="compositionally biased region" description="Polar residues" evidence="2">
    <location>
        <begin position="166"/>
        <end position="176"/>
    </location>
</feature>
<feature type="modified residue" description="N-acetylalanine" evidence="1">
    <location>
        <position position="2"/>
    </location>
</feature>
<feature type="modified residue" description="Phosphoserine" evidence="1">
    <location>
        <position position="7"/>
    </location>
</feature>
<feature type="modified residue" description="Citrulline" evidence="1">
    <location>
        <position position="25"/>
    </location>
</feature>
<feature type="modified residue" description="Citrulline" evidence="1">
    <location>
        <position position="33"/>
    </location>
</feature>
<feature type="modified residue" description="Phosphoserine" evidence="1">
    <location>
        <position position="58"/>
    </location>
</feature>
<feature type="modified residue" description="Deamidated asparagine" evidence="1">
    <location>
        <position position="97"/>
    </location>
</feature>
<feature type="modified residue" description="Phosphothreonine" evidence="1">
    <location>
        <position position="103"/>
    </location>
</feature>
<feature type="modified residue" description="Deamidated glutamine" evidence="1">
    <location>
        <position position="108"/>
    </location>
</feature>
<feature type="modified residue" description="Symmetric dimethylarginine" evidence="1">
    <location>
        <position position="111"/>
    </location>
</feature>
<feature type="modified residue" description="Phosphoserine" evidence="1">
    <location>
        <position position="117"/>
    </location>
</feature>
<feature type="modified residue" description="Phosphoserine" evidence="1">
    <location>
        <position position="167"/>
    </location>
</feature>
<feature type="modified residue" description="Phosphoserine" evidence="1">
    <location>
        <position position="171"/>
    </location>
</feature>
<feature type="modified residue" description="Citrulline" evidence="1">
    <location>
        <position position="176"/>
    </location>
</feature>
<reference key="1">
    <citation type="submission" date="1997-01" db="EMBL/GenBank/DDBJ databases">
        <title>cDNA for Xenopus laevis myelin basic protein.</title>
        <authorList>
            <person name="Nagata S."/>
            <person name="Ogino K."/>
        </authorList>
    </citation>
    <scope>NUCLEOTIDE SEQUENCE [MRNA]</scope>
    <source>
        <strain>J</strain>
        <tissue>Brain</tissue>
    </source>
</reference>
<reference key="2">
    <citation type="submission" date="2006-12" db="EMBL/GenBank/DDBJ databases">
        <authorList>
            <consortium name="NIH - Xenopus Gene Collection (XGC) project"/>
        </authorList>
    </citation>
    <scope>NUCLEOTIDE SEQUENCE [LARGE SCALE MRNA]</scope>
    <source>
        <tissue>Tail</tissue>
    </source>
</reference>
<dbReference type="EMBL" id="AB000736">
    <property type="protein sequence ID" value="BAA19174.1"/>
    <property type="molecule type" value="mRNA"/>
</dbReference>
<dbReference type="EMBL" id="BC129777">
    <property type="protein sequence ID" value="AAI29778.1"/>
    <property type="molecule type" value="mRNA"/>
</dbReference>
<dbReference type="RefSeq" id="NP_001083760.1">
    <property type="nucleotide sequence ID" value="NM_001090291.1"/>
</dbReference>
<dbReference type="SMR" id="P87346"/>
<dbReference type="BioGRID" id="100427">
    <property type="interactions" value="3"/>
</dbReference>
<dbReference type="DNASU" id="399102"/>
<dbReference type="GeneID" id="399102"/>
<dbReference type="KEGG" id="xla:399102"/>
<dbReference type="AGR" id="Xenbase:XB-GENE-17333093"/>
<dbReference type="CTD" id="399102"/>
<dbReference type="Xenbase" id="XB-GENE-17333093">
    <property type="gene designation" value="mbp.S"/>
</dbReference>
<dbReference type="OrthoDB" id="8862162at2759"/>
<dbReference type="Proteomes" id="UP000186698">
    <property type="component" value="Chromosome 6S"/>
</dbReference>
<dbReference type="Bgee" id="399102">
    <property type="expression patterns" value="Expressed in brain and 18 other cell types or tissues"/>
</dbReference>
<dbReference type="GO" id="GO:0071944">
    <property type="term" value="C:cell periphery"/>
    <property type="evidence" value="ECO:0000318"/>
    <property type="project" value="GO_Central"/>
</dbReference>
<dbReference type="GO" id="GO:0043218">
    <property type="term" value="C:compact myelin"/>
    <property type="evidence" value="ECO:0000318"/>
    <property type="project" value="GO_Central"/>
</dbReference>
<dbReference type="GO" id="GO:0033269">
    <property type="term" value="C:internode region of axon"/>
    <property type="evidence" value="ECO:0000318"/>
    <property type="project" value="GO_Central"/>
</dbReference>
<dbReference type="GO" id="GO:0043025">
    <property type="term" value="C:neuronal cell body"/>
    <property type="evidence" value="ECO:0000318"/>
    <property type="project" value="GO_Central"/>
</dbReference>
<dbReference type="GO" id="GO:0005886">
    <property type="term" value="C:plasma membrane"/>
    <property type="evidence" value="ECO:0007669"/>
    <property type="project" value="UniProtKB-KW"/>
</dbReference>
<dbReference type="GO" id="GO:0019911">
    <property type="term" value="F:structural constituent of myelin sheath"/>
    <property type="evidence" value="ECO:0007669"/>
    <property type="project" value="InterPro"/>
</dbReference>
<dbReference type="GO" id="GO:0042552">
    <property type="term" value="P:myelination"/>
    <property type="evidence" value="ECO:0000318"/>
    <property type="project" value="GO_Central"/>
</dbReference>
<dbReference type="InterPro" id="IPR000548">
    <property type="entry name" value="Myelin_BP"/>
</dbReference>
<dbReference type="PANTHER" id="PTHR11429">
    <property type="entry name" value="MYELIN BASIC PROTEIN"/>
    <property type="match status" value="1"/>
</dbReference>
<dbReference type="PANTHER" id="PTHR11429:SF0">
    <property type="entry name" value="MYELIN BASIC PROTEIN"/>
    <property type="match status" value="1"/>
</dbReference>
<dbReference type="Pfam" id="PF01669">
    <property type="entry name" value="Myelin_MBP"/>
    <property type="match status" value="1"/>
</dbReference>
<dbReference type="PRINTS" id="PR00212">
    <property type="entry name" value="MYELINMBP"/>
</dbReference>
<gene>
    <name type="primary">mbp</name>
</gene>
<sequence>MASQKHSRGHGSKQMATASTYDHSRHGYGAHGRHRDSGLLDSLGRFFGGERSVPRKGSGKEVHMSRSGYLSSSPQRSPYHAHGRHVDDNPVVHFFRNIVSPRTPPPSQPKRGFSRFSWGAENHKPYYGGYGSRSLEHHKSSYKGYKDPHREGHGSLSRIFKLGGQRSRSSSPMARR</sequence>